<proteinExistence type="evidence at protein level"/>
<feature type="chain" id="PRO_0000202881" description="Oxidant-induced cell-cycle arrest protein 5">
    <location>
        <begin position="1"/>
        <end position="679"/>
    </location>
</feature>
<feature type="domain" description="Rab-GAP TBC">
    <location>
        <begin position="50"/>
        <end position="441"/>
    </location>
</feature>
<feature type="region of interest" description="Disordered" evidence="1">
    <location>
        <begin position="135"/>
        <end position="159"/>
    </location>
</feature>
<feature type="region of interest" description="Disordered" evidence="1">
    <location>
        <begin position="250"/>
        <end position="271"/>
    </location>
</feature>
<feature type="region of interest" description="Disordered" evidence="1">
    <location>
        <begin position="524"/>
        <end position="544"/>
    </location>
</feature>
<feature type="compositionally biased region" description="Low complexity" evidence="1">
    <location>
        <begin position="135"/>
        <end position="153"/>
    </location>
</feature>
<feature type="compositionally biased region" description="Polar residues" evidence="1">
    <location>
        <begin position="524"/>
        <end position="539"/>
    </location>
</feature>
<dbReference type="EMBL" id="U11583">
    <property type="protein sequence ID" value="AAB65041.1"/>
    <property type="molecule type" value="Genomic_DNA"/>
</dbReference>
<dbReference type="EMBL" id="BK006934">
    <property type="protein sequence ID" value="DAA06656.1"/>
    <property type="molecule type" value="Genomic_DNA"/>
</dbReference>
<dbReference type="PIR" id="S48939">
    <property type="entry name" value="S48939"/>
</dbReference>
<dbReference type="RefSeq" id="NP_011834.1">
    <property type="nucleotide sequence ID" value="NM_001179109.1"/>
</dbReference>
<dbReference type="BioGRID" id="36393">
    <property type="interactions" value="492"/>
</dbReference>
<dbReference type="DIP" id="DIP-5006N"/>
<dbReference type="FunCoup" id="P38738">
    <property type="interactions" value="74"/>
</dbReference>
<dbReference type="IntAct" id="P38738">
    <property type="interactions" value="10"/>
</dbReference>
<dbReference type="MINT" id="P38738"/>
<dbReference type="STRING" id="4932.YHL029C"/>
<dbReference type="iPTMnet" id="P38738"/>
<dbReference type="PaxDb" id="4932-YHL029C"/>
<dbReference type="PeptideAtlas" id="P38738"/>
<dbReference type="EnsemblFungi" id="YHL029C_mRNA">
    <property type="protein sequence ID" value="YHL029C"/>
    <property type="gene ID" value="YHL029C"/>
</dbReference>
<dbReference type="GeneID" id="856356"/>
<dbReference type="KEGG" id="sce:YHL029C"/>
<dbReference type="AGR" id="SGD:S000001021"/>
<dbReference type="SGD" id="S000001021">
    <property type="gene designation" value="OCA5"/>
</dbReference>
<dbReference type="VEuPathDB" id="FungiDB:YHL029C"/>
<dbReference type="eggNOG" id="ENOG502QVXN">
    <property type="taxonomic scope" value="Eukaryota"/>
</dbReference>
<dbReference type="HOGENOM" id="CLU_028817_0_0_1"/>
<dbReference type="InParanoid" id="P38738"/>
<dbReference type="OMA" id="LRFKVWP"/>
<dbReference type="OrthoDB" id="27140at2759"/>
<dbReference type="BioCyc" id="YEAST:G3O-31049-MONOMER"/>
<dbReference type="BioGRID-ORCS" id="856356">
    <property type="hits" value="0 hits in 10 CRISPR screens"/>
</dbReference>
<dbReference type="PRO" id="PR:P38738"/>
<dbReference type="Proteomes" id="UP000002311">
    <property type="component" value="Chromosome VIII"/>
</dbReference>
<dbReference type="RNAct" id="P38738">
    <property type="molecule type" value="protein"/>
</dbReference>
<dbReference type="GO" id="GO:0005737">
    <property type="term" value="C:cytoplasm"/>
    <property type="evidence" value="ECO:0007005"/>
    <property type="project" value="SGD"/>
</dbReference>
<dbReference type="Gene3D" id="1.10.472.80">
    <property type="entry name" value="Ypt/Rab-GAP domain of gyp1p, domain 3"/>
    <property type="match status" value="1"/>
</dbReference>
<dbReference type="InterPro" id="IPR000195">
    <property type="entry name" value="Rab-GAP-TBC_dom"/>
</dbReference>
<dbReference type="InterPro" id="IPR035969">
    <property type="entry name" value="Rab-GAP_TBC_sf"/>
</dbReference>
<dbReference type="SMART" id="SM00164">
    <property type="entry name" value="TBC"/>
    <property type="match status" value="1"/>
</dbReference>
<dbReference type="SUPFAM" id="SSF47923">
    <property type="entry name" value="Ypt/Rab-GAP domain of gyp1p"/>
    <property type="match status" value="1"/>
</dbReference>
<comment type="function">
    <text evidence="4">Required for replication of brome mosaic virus (BMV), a positive-strand RNA virus.</text>
</comment>
<comment type="interaction">
    <interactant intactId="EBI-24355">
        <id>P38738</id>
    </interactant>
    <interactant intactId="EBI-22021">
        <id>P25366</id>
        <label>OCA4</label>
    </interactant>
    <organismsDiffer>false</organismsDiffer>
    <experiments>5</experiments>
</comment>
<comment type="subcellular location">
    <subcellularLocation>
        <location evidence="2">Cytoplasm</location>
    </subcellularLocation>
</comment>
<comment type="miscellaneous">
    <text evidence="3">Present with 12500 molecules/cell in log phase SD medium.</text>
</comment>
<comment type="similarity">
    <text evidence="5">Belongs to the OCA5 family.</text>
</comment>
<organism>
    <name type="scientific">Saccharomyces cerevisiae (strain ATCC 204508 / S288c)</name>
    <name type="common">Baker's yeast</name>
    <dbReference type="NCBI Taxonomy" id="559292"/>
    <lineage>
        <taxon>Eukaryota</taxon>
        <taxon>Fungi</taxon>
        <taxon>Dikarya</taxon>
        <taxon>Ascomycota</taxon>
        <taxon>Saccharomycotina</taxon>
        <taxon>Saccharomycetes</taxon>
        <taxon>Saccharomycetales</taxon>
        <taxon>Saccharomycetaceae</taxon>
        <taxon>Saccharomyces</taxon>
    </lineage>
</organism>
<reference key="1">
    <citation type="journal article" date="1994" name="Science">
        <title>Complete nucleotide sequence of Saccharomyces cerevisiae chromosome VIII.</title>
        <authorList>
            <person name="Johnston M."/>
            <person name="Andrews S."/>
            <person name="Brinkman R."/>
            <person name="Cooper J."/>
            <person name="Ding H."/>
            <person name="Dover J."/>
            <person name="Du Z."/>
            <person name="Favello A."/>
            <person name="Fulton L."/>
            <person name="Gattung S."/>
            <person name="Geisel C."/>
            <person name="Kirsten J."/>
            <person name="Kucaba T."/>
            <person name="Hillier L.W."/>
            <person name="Jier M."/>
            <person name="Johnston L."/>
            <person name="Langston Y."/>
            <person name="Latreille P."/>
            <person name="Louis E.J."/>
            <person name="Macri C."/>
            <person name="Mardis E."/>
            <person name="Menezes S."/>
            <person name="Mouser L."/>
            <person name="Nhan M."/>
            <person name="Rifkin L."/>
            <person name="Riles L."/>
            <person name="St Peter H."/>
            <person name="Trevaskis E."/>
            <person name="Vaughan K."/>
            <person name="Vignati D."/>
            <person name="Wilcox L."/>
            <person name="Wohldman P."/>
            <person name="Waterston R."/>
            <person name="Wilson R."/>
            <person name="Vaudin M."/>
        </authorList>
    </citation>
    <scope>NUCLEOTIDE SEQUENCE [LARGE SCALE GENOMIC DNA]</scope>
    <source>
        <strain>ATCC 204508 / S288c</strain>
    </source>
</reference>
<reference key="2">
    <citation type="journal article" date="2014" name="G3 (Bethesda)">
        <title>The reference genome sequence of Saccharomyces cerevisiae: Then and now.</title>
        <authorList>
            <person name="Engel S.R."/>
            <person name="Dietrich F.S."/>
            <person name="Fisk D.G."/>
            <person name="Binkley G."/>
            <person name="Balakrishnan R."/>
            <person name="Costanzo M.C."/>
            <person name="Dwight S.S."/>
            <person name="Hitz B.C."/>
            <person name="Karra K."/>
            <person name="Nash R.S."/>
            <person name="Weng S."/>
            <person name="Wong E.D."/>
            <person name="Lloyd P."/>
            <person name="Skrzypek M.S."/>
            <person name="Miyasato S.R."/>
            <person name="Simison M."/>
            <person name="Cherry J.M."/>
        </authorList>
    </citation>
    <scope>GENOME REANNOTATION</scope>
    <source>
        <strain>ATCC 204508 / S288c</strain>
    </source>
</reference>
<reference key="3">
    <citation type="journal article" date="2003" name="Nature">
        <title>Global analysis of protein localization in budding yeast.</title>
        <authorList>
            <person name="Huh W.-K."/>
            <person name="Falvo J.V."/>
            <person name="Gerke L.C."/>
            <person name="Carroll A.S."/>
            <person name="Howson R.W."/>
            <person name="Weissman J.S."/>
            <person name="O'Shea E.K."/>
        </authorList>
    </citation>
    <scope>SUBCELLULAR LOCATION [LARGE SCALE ANALYSIS]</scope>
</reference>
<reference key="4">
    <citation type="journal article" date="2003" name="Nature">
        <title>Global analysis of protein expression in yeast.</title>
        <authorList>
            <person name="Ghaemmaghami S."/>
            <person name="Huh W.-K."/>
            <person name="Bower K."/>
            <person name="Howson R.W."/>
            <person name="Belle A."/>
            <person name="Dephoure N."/>
            <person name="O'Shea E.K."/>
            <person name="Weissman J.S."/>
        </authorList>
    </citation>
    <scope>LEVEL OF PROTEIN EXPRESSION [LARGE SCALE ANALYSIS]</scope>
</reference>
<reference key="5">
    <citation type="journal article" date="2003" name="Proc. Natl. Acad. Sci. U.S.A.">
        <title>Systematic, genome-wide identification of host genes affecting replication of a positive-strand RNA virus.</title>
        <authorList>
            <person name="Kushner D.B."/>
            <person name="Lindenbach B.D."/>
            <person name="Grdzelishvili V.Z."/>
            <person name="Noueiry A.O."/>
            <person name="Paul S.M."/>
            <person name="Ahlquist P."/>
        </authorList>
    </citation>
    <scope>FUNCTION</scope>
</reference>
<keyword id="KW-0963">Cytoplasm</keyword>
<keyword id="KW-1185">Reference proteome</keyword>
<sequence>MHDKKSPMANSHYLKNLKQQFRNKNLIETTIHLVKCNDHDSLAFLARTYGVPPQLRHVVWPILLKYHPMCISPNITSNTISWDPITNDFILNDPFLKSKAPTDKQDKSDDENILPYDIESIILHDLKKYFHSRSNPAGSSSNANTTNIATPTPVSSSDASTISSMEVLSPSLDYEFQIIETLKNAIVKFLLKWSKIFKYESGLAWIALGLAEWYPIYPYETMSPFNETHSFYEVEDYVVLSGRKHALLSTNNGNNGNSNSSSNNTNNNNTNITSGMHNLSINTNTSLHNSPYISHTLSYLYKEYPLPFELRSKLPTKPIFSFSALFERLALVILHCPDTILAHKQLKNDSNASSSSKANSNFNTNYFPIISGGDLSFQTQVFFKVFSSILPELYQPLTEESSLQPSSSRNSWIYWWLKCSGAKALQRQDRGRVWDLLLGWRPKPNMDTINFFLNYNDKKMDHLYHDTPQCDNEQYWMKDWIALYNNDPFWFPDLDSMALGSKKFPYDYSVFKELILRNRYGGTQSKAQKDNTVPSPGSDSNDKSELKLPFSSIDPHMQLIFIFIAILQFNEFKLLEFEEAEISEFLNNVPLLTKFDDSSYRKLYENTESSITSLPSSPTTSTMASLQSSSNSSAHISNYHMLIEVGNDAKASHCFDDLLNMAGDIWRKWLWRELEESSL</sequence>
<name>OCA5_YEAST</name>
<accession>P38738</accession>
<accession>D3DKT9</accession>
<gene>
    <name type="primary">OCA5</name>
    <name type="ordered locus">YHL029C</name>
</gene>
<evidence type="ECO:0000256" key="1">
    <source>
        <dbReference type="SAM" id="MobiDB-lite"/>
    </source>
</evidence>
<evidence type="ECO:0000269" key="2">
    <source>
    </source>
</evidence>
<evidence type="ECO:0000269" key="3">
    <source>
    </source>
</evidence>
<evidence type="ECO:0000269" key="4">
    <source>
    </source>
</evidence>
<evidence type="ECO:0000305" key="5"/>
<protein>
    <recommendedName>
        <fullName>Oxidant-induced cell-cycle arrest protein 5</fullName>
    </recommendedName>
</protein>